<organism>
    <name type="scientific">Monascus purpureus</name>
    <name type="common">Red mold</name>
    <name type="synonym">Monascus anka</name>
    <dbReference type="NCBI Taxonomy" id="5098"/>
    <lineage>
        <taxon>Eukaryota</taxon>
        <taxon>Fungi</taxon>
        <taxon>Dikarya</taxon>
        <taxon>Ascomycota</taxon>
        <taxon>Pezizomycotina</taxon>
        <taxon>Eurotiomycetes</taxon>
        <taxon>Eurotiomycetidae</taxon>
        <taxon>Eurotiales</taxon>
        <taxon>Aspergillaceae</taxon>
        <taxon>Monascus</taxon>
    </lineage>
</organism>
<accession>Q1ERI0</accession>
<reference key="1">
    <citation type="journal article" date="2007" name="Appl. Environ. Microbiol.">
        <title>Identification and in vivo functional analysis by gene disruption of ctnA, an activator gene involved in citrinin biosynthesis in Monascus purpureus.</title>
        <authorList>
            <person name="Shimizu T."/>
            <person name="Kinoshita H."/>
            <person name="Nihira T."/>
        </authorList>
    </citation>
    <scope>NUCLEOTIDE SEQUENCE [GENOMIC DNA]</scope>
    <scope>FUNCTION</scope>
</reference>
<reference key="2">
    <citation type="journal article" date="2008" name="J. Agric. Food Chem.">
        <title>Exploring the distribution of citrinin biosynthesis related genes among Monascus species.</title>
        <authorList>
            <person name="Chen Y.P."/>
            <person name="Tseng C.P."/>
            <person name="Chien I.L."/>
            <person name="Wang W.Y."/>
            <person name="Liaw L.L."/>
            <person name="Yuan G.F."/>
        </authorList>
    </citation>
    <scope>FUNCTION</scope>
</reference>
<reference key="3">
    <citation type="journal article" date="2008" name="J. Biosci. Bioeng.">
        <title>Construction of a citrinin gene cluster expression system in heterologous Aspergillus oryzae.</title>
        <authorList>
            <person name="Sakai K."/>
            <person name="Kinoshita H."/>
            <person name="Shimizu T."/>
            <person name="Nihira T."/>
        </authorList>
    </citation>
    <scope>FUNCTION</scope>
</reference>
<reference key="4">
    <citation type="journal article" date="2017" name="Cell Chem. Biol.">
        <title>Functional and structural analysis of programmed C-methylation in the biosynthesis of the fungal polyketide citrinin.</title>
        <authorList>
            <person name="Storm P.A."/>
            <person name="Herbst D.A."/>
            <person name="Maier T."/>
            <person name="Townsend C.A."/>
        </authorList>
    </citation>
    <scope>FUNCTION</scope>
</reference>
<reference key="5">
    <citation type="journal article" date="2017" name="J. Biotechnol.">
        <title>Methylotrophic yeast Pichia pastoris as a chassis organism for polyketide synthesis via the full citrinin biosynthetic pathway.</title>
        <authorList>
            <person name="Xue Y."/>
            <person name="Kong C."/>
            <person name="Shen W."/>
            <person name="Bai C."/>
            <person name="Ren Y."/>
            <person name="Zhou X."/>
            <person name="Zhang Y."/>
            <person name="Cai M."/>
        </authorList>
    </citation>
    <scope>FUNCTION</scope>
    <scope>CATALYTIC ACTIVITY</scope>
    <scope>PATHWAY</scope>
</reference>
<protein>
    <recommendedName>
        <fullName evidence="9">2-oxoglutarate-dependent dioxygenase mpl2</fullName>
        <ecNumber evidence="6">1.14.-.-</ecNumber>
    </recommendedName>
    <alternativeName>
        <fullName evidence="8">Citrinin synthesis protein A</fullName>
    </alternativeName>
</protein>
<gene>
    <name evidence="9" type="primary">mpl2</name>
    <name evidence="8" type="synonym">ctnA</name>
</gene>
<evidence type="ECO:0000250" key="1">
    <source>
        <dbReference type="UniProtKB" id="A0A161CKG1"/>
    </source>
</evidence>
<evidence type="ECO:0000255" key="2">
    <source>
        <dbReference type="PROSITE-ProRule" id="PRU00805"/>
    </source>
</evidence>
<evidence type="ECO:0000269" key="3">
    <source>
    </source>
</evidence>
<evidence type="ECO:0000269" key="4">
    <source>
    </source>
</evidence>
<evidence type="ECO:0000269" key="5">
    <source>
    </source>
</evidence>
<evidence type="ECO:0000269" key="6">
    <source>
    </source>
</evidence>
<evidence type="ECO:0000269" key="7">
    <source>
    </source>
</evidence>
<evidence type="ECO:0000303" key="8">
    <source>
    </source>
</evidence>
<evidence type="ECO:0000303" key="9">
    <source>
    </source>
</evidence>
<evidence type="ECO:0000305" key="10"/>
<dbReference type="EC" id="1.14.-.-" evidence="6"/>
<dbReference type="EMBL" id="AB243687">
    <property type="protein sequence ID" value="BAE95338.1"/>
    <property type="molecule type" value="Genomic_DNA"/>
</dbReference>
<dbReference type="SMR" id="Q1ERI0"/>
<dbReference type="OrthoDB" id="288590at2759"/>
<dbReference type="GO" id="GO:0051213">
    <property type="term" value="F:dioxygenase activity"/>
    <property type="evidence" value="ECO:0007669"/>
    <property type="project" value="UniProtKB-KW"/>
</dbReference>
<dbReference type="GO" id="GO:0046872">
    <property type="term" value="F:metal ion binding"/>
    <property type="evidence" value="ECO:0007669"/>
    <property type="project" value="UniProtKB-KW"/>
</dbReference>
<dbReference type="GO" id="GO:0044283">
    <property type="term" value="P:small molecule biosynthetic process"/>
    <property type="evidence" value="ECO:0007669"/>
    <property type="project" value="UniProtKB-ARBA"/>
</dbReference>
<dbReference type="Gene3D" id="2.60.120.330">
    <property type="entry name" value="B-lactam Antibiotic, Isopenicillin N Synthase, Chain"/>
    <property type="match status" value="1"/>
</dbReference>
<dbReference type="InterPro" id="IPR026992">
    <property type="entry name" value="DIOX_N"/>
</dbReference>
<dbReference type="InterPro" id="IPR044861">
    <property type="entry name" value="IPNS-like_FE2OG_OXY"/>
</dbReference>
<dbReference type="InterPro" id="IPR027443">
    <property type="entry name" value="IPNS-like_sf"/>
</dbReference>
<dbReference type="InterPro" id="IPR050231">
    <property type="entry name" value="Iron_ascorbate_oxido_reductase"/>
</dbReference>
<dbReference type="InterPro" id="IPR005123">
    <property type="entry name" value="Oxoglu/Fe-dep_dioxygenase_dom"/>
</dbReference>
<dbReference type="PANTHER" id="PTHR47990">
    <property type="entry name" value="2-OXOGLUTARATE (2OG) AND FE(II)-DEPENDENT OXYGENASE SUPERFAMILY PROTEIN-RELATED"/>
    <property type="match status" value="1"/>
</dbReference>
<dbReference type="Pfam" id="PF03171">
    <property type="entry name" value="2OG-FeII_Oxy"/>
    <property type="match status" value="1"/>
</dbReference>
<dbReference type="Pfam" id="PF14226">
    <property type="entry name" value="DIOX_N"/>
    <property type="match status" value="1"/>
</dbReference>
<dbReference type="PRINTS" id="PR00682">
    <property type="entry name" value="IPNSYNTHASE"/>
</dbReference>
<dbReference type="SUPFAM" id="SSF51197">
    <property type="entry name" value="Clavaminate synthase-like"/>
    <property type="match status" value="1"/>
</dbReference>
<dbReference type="PROSITE" id="PS51471">
    <property type="entry name" value="FE2OG_OXY"/>
    <property type="match status" value="1"/>
</dbReference>
<comment type="function">
    <text evidence="1 3 4 5 6 7">2-oxoglutarate-dependent dioxygenase; part of the gene cluster that mediates the biosynthesis of the mycotoxin citrinin, a hepato-nephrotoxic compound to humans due to inhibition of respiration complex III (PubMed:17586673, PubMed:19012408, PubMed:19111642, PubMed:27913218, PubMed:28238725). The pathway begins with the synthesis of a keto-aldehyde intermediate by the citrinin PKS (pksCT) from successive condensations of 4 malonyl-CoA units, presumably with a simple acetyl-CoA starter unit (PubMed:28238725). Release of the keto-aldehyde intermediate is consistent with the presence of the C-terminal reductive release domain (PubMed:28238725). Mp11 collaborates with pksCT by catalyzing the hydrolysis of ACP-bound acyl intermediates to free the ACP from stalled intermediates (By similarity). Mpl2 then catalyzes the oxidation of the C-12 methyl of the ketone intermediate to an alcohol intermediate which is further oxidized by the oxidoreductase mpl7 to produce a bisaldehyde intermediate (PubMed:27913218). The fourth catalytic step is catalyzed by the mpl4 aldehyde dehydrogenase (PubMed:27913218). The final transformation is the reduction of C-3 by mpl6 to provide the chemically stable citrinin nucleus (PubMed:27913218).</text>
</comment>
<comment type="cofactor">
    <cofactor evidence="2">
        <name>Fe(2+)</name>
        <dbReference type="ChEBI" id="CHEBI:29033"/>
    </cofactor>
    <text evidence="2">Binds 1 Fe(2+) ion per subunit.</text>
</comment>
<comment type="pathway">
    <text evidence="6">Mycotoxin biosynthesis.</text>
</comment>
<comment type="similarity">
    <text evidence="10">Belongs to the iron/ascorbate-dependent oxidoreductase family.</text>
</comment>
<keyword id="KW-0223">Dioxygenase</keyword>
<keyword id="KW-0408">Iron</keyword>
<keyword id="KW-0479">Metal-binding</keyword>
<keyword id="KW-0560">Oxidoreductase</keyword>
<sequence>MPISTKSSFYLPAVDISPYLQDPNSDAARKVIDDVRAACTSTGFFQLLGHGISPALQQSVFAAAAKFFALPSDVKSRCRNVGFRGYDPMASQSYELGVLPDLKEGFIAGKDIPLDDPRVASQRFFMGQNAWPPSELLPEANFRRPIEEYYQAMLKLCWVVLDLVAATLPYGPHVFDEFKENDPACPLRLLHYPPAPAPDVAKGRQLGSSAHTDFGAITLLLQDDHSGLEVQDCETGEWIGVPPNKDAYVVNLGDMMSRITRGHYKSSIHRVINQNLTDRYSVVFFFDGNLDYRLRPLDRVGQNWDEEDTLTVEEHMLERTTTTYNLKVK</sequence>
<feature type="chain" id="PRO_0000440316" description="2-oxoglutarate-dependent dioxygenase mpl2">
    <location>
        <begin position="1"/>
        <end position="329"/>
    </location>
</feature>
<feature type="domain" description="Fe2OG dioxygenase" evidence="2">
    <location>
        <begin position="183"/>
        <end position="288"/>
    </location>
</feature>
<feature type="binding site" evidence="2">
    <location>
        <position position="211"/>
    </location>
    <ligand>
        <name>Fe cation</name>
        <dbReference type="ChEBI" id="CHEBI:24875"/>
    </ligand>
</feature>
<feature type="binding site" evidence="2">
    <location>
        <position position="213"/>
    </location>
    <ligand>
        <name>Fe cation</name>
        <dbReference type="ChEBI" id="CHEBI:24875"/>
    </ligand>
</feature>
<feature type="binding site" evidence="2">
    <location>
        <position position="269"/>
    </location>
    <ligand>
        <name>Fe cation</name>
        <dbReference type="ChEBI" id="CHEBI:24875"/>
    </ligand>
</feature>
<feature type="binding site" evidence="2">
    <location>
        <position position="279"/>
    </location>
    <ligand>
        <name>2-oxoglutarate</name>
        <dbReference type="ChEBI" id="CHEBI:16810"/>
    </ligand>
</feature>
<name>CITB_MONPU</name>
<proteinExistence type="evidence at protein level"/>